<name>RL5_CUPMC</name>
<comment type="function">
    <text evidence="1">This is one of the proteins that bind and probably mediate the attachment of the 5S RNA into the large ribosomal subunit, where it forms part of the central protuberance. In the 70S ribosome it contacts protein S13 of the 30S subunit (bridge B1b), connecting the 2 subunits; this bridge is implicated in subunit movement. Contacts the P site tRNA; the 5S rRNA and some of its associated proteins might help stabilize positioning of ribosome-bound tRNAs.</text>
</comment>
<comment type="subunit">
    <text evidence="1">Part of the 50S ribosomal subunit; part of the 5S rRNA/L5/L18/L25 subcomplex. Contacts the 5S rRNA and the P site tRNA. Forms a bridge to the 30S subunit in the 70S ribosome.</text>
</comment>
<comment type="similarity">
    <text evidence="1">Belongs to the universal ribosomal protein uL5 family.</text>
</comment>
<keyword id="KW-1185">Reference proteome</keyword>
<keyword id="KW-0687">Ribonucleoprotein</keyword>
<keyword id="KW-0689">Ribosomal protein</keyword>
<keyword id="KW-0694">RNA-binding</keyword>
<keyword id="KW-0699">rRNA-binding</keyword>
<keyword id="KW-0820">tRNA-binding</keyword>
<gene>
    <name evidence="1" type="primary">rplE</name>
    <name type="ordered locus">Rmet_3305</name>
</gene>
<proteinExistence type="inferred from homology"/>
<reference key="1">
    <citation type="journal article" date="2010" name="PLoS ONE">
        <title>The complete genome sequence of Cupriavidus metallidurans strain CH34, a master survivalist in harsh and anthropogenic environments.</title>
        <authorList>
            <person name="Janssen P.J."/>
            <person name="Van Houdt R."/>
            <person name="Moors H."/>
            <person name="Monsieurs P."/>
            <person name="Morin N."/>
            <person name="Michaux A."/>
            <person name="Benotmane M.A."/>
            <person name="Leys N."/>
            <person name="Vallaeys T."/>
            <person name="Lapidus A."/>
            <person name="Monchy S."/>
            <person name="Medigue C."/>
            <person name="Taghavi S."/>
            <person name="McCorkle S."/>
            <person name="Dunn J."/>
            <person name="van der Lelie D."/>
            <person name="Mergeay M."/>
        </authorList>
    </citation>
    <scope>NUCLEOTIDE SEQUENCE [LARGE SCALE GENOMIC DNA]</scope>
    <source>
        <strain>ATCC 43123 / DSM 2839 / NBRC 102507 / CH34</strain>
    </source>
</reference>
<organism>
    <name type="scientific">Cupriavidus metallidurans (strain ATCC 43123 / DSM 2839 / NBRC 102507 / CH34)</name>
    <name type="common">Ralstonia metallidurans</name>
    <dbReference type="NCBI Taxonomy" id="266264"/>
    <lineage>
        <taxon>Bacteria</taxon>
        <taxon>Pseudomonadati</taxon>
        <taxon>Pseudomonadota</taxon>
        <taxon>Betaproteobacteria</taxon>
        <taxon>Burkholderiales</taxon>
        <taxon>Burkholderiaceae</taxon>
        <taxon>Cupriavidus</taxon>
    </lineage>
</organism>
<protein>
    <recommendedName>
        <fullName evidence="1">Large ribosomal subunit protein uL5</fullName>
    </recommendedName>
    <alternativeName>
        <fullName evidence="2">50S ribosomal protein L5</fullName>
    </alternativeName>
</protein>
<feature type="chain" id="PRO_1000052806" description="Large ribosomal subunit protein uL5">
    <location>
        <begin position="1"/>
        <end position="180"/>
    </location>
</feature>
<accession>Q1LI49</accession>
<sequence>MTARLQEFYKEQVVPALMKQFGYKSVMEVPRFTKITLNMGLGEAINDKKVIELAVGDLTKIAGQKPVVTKAKKAIAGFKIRQGYPIGAMVTLRGERMFEFLDRFVTVALPRVRDFRGVSGKSFDGRGNYNIGVKEQIIFPEIEYDKIDALRGLNISITTTAKNDEEAKALLNAFKFPFRN</sequence>
<evidence type="ECO:0000255" key="1">
    <source>
        <dbReference type="HAMAP-Rule" id="MF_01333"/>
    </source>
</evidence>
<evidence type="ECO:0000305" key="2"/>
<dbReference type="EMBL" id="CP000352">
    <property type="protein sequence ID" value="ABF10177.1"/>
    <property type="molecule type" value="Genomic_DNA"/>
</dbReference>
<dbReference type="RefSeq" id="WP_008642941.1">
    <property type="nucleotide sequence ID" value="NC_007973.1"/>
</dbReference>
<dbReference type="SMR" id="Q1LI49"/>
<dbReference type="STRING" id="266264.Rmet_3305"/>
<dbReference type="GeneID" id="60826612"/>
<dbReference type="KEGG" id="rme:Rmet_3305"/>
<dbReference type="eggNOG" id="COG0094">
    <property type="taxonomic scope" value="Bacteria"/>
</dbReference>
<dbReference type="HOGENOM" id="CLU_061015_2_1_4"/>
<dbReference type="Proteomes" id="UP000002429">
    <property type="component" value="Chromosome"/>
</dbReference>
<dbReference type="GO" id="GO:1990904">
    <property type="term" value="C:ribonucleoprotein complex"/>
    <property type="evidence" value="ECO:0007669"/>
    <property type="project" value="UniProtKB-KW"/>
</dbReference>
<dbReference type="GO" id="GO:0005840">
    <property type="term" value="C:ribosome"/>
    <property type="evidence" value="ECO:0007669"/>
    <property type="project" value="UniProtKB-KW"/>
</dbReference>
<dbReference type="GO" id="GO:0019843">
    <property type="term" value="F:rRNA binding"/>
    <property type="evidence" value="ECO:0007669"/>
    <property type="project" value="UniProtKB-UniRule"/>
</dbReference>
<dbReference type="GO" id="GO:0003735">
    <property type="term" value="F:structural constituent of ribosome"/>
    <property type="evidence" value="ECO:0007669"/>
    <property type="project" value="InterPro"/>
</dbReference>
<dbReference type="GO" id="GO:0000049">
    <property type="term" value="F:tRNA binding"/>
    <property type="evidence" value="ECO:0007669"/>
    <property type="project" value="UniProtKB-UniRule"/>
</dbReference>
<dbReference type="GO" id="GO:0006412">
    <property type="term" value="P:translation"/>
    <property type="evidence" value="ECO:0007669"/>
    <property type="project" value="UniProtKB-UniRule"/>
</dbReference>
<dbReference type="FunFam" id="3.30.1440.10:FF:000001">
    <property type="entry name" value="50S ribosomal protein L5"/>
    <property type="match status" value="1"/>
</dbReference>
<dbReference type="Gene3D" id="3.30.1440.10">
    <property type="match status" value="1"/>
</dbReference>
<dbReference type="HAMAP" id="MF_01333_B">
    <property type="entry name" value="Ribosomal_uL5_B"/>
    <property type="match status" value="1"/>
</dbReference>
<dbReference type="InterPro" id="IPR002132">
    <property type="entry name" value="Ribosomal_uL5"/>
</dbReference>
<dbReference type="InterPro" id="IPR020930">
    <property type="entry name" value="Ribosomal_uL5_bac-type"/>
</dbReference>
<dbReference type="InterPro" id="IPR031309">
    <property type="entry name" value="Ribosomal_uL5_C"/>
</dbReference>
<dbReference type="InterPro" id="IPR020929">
    <property type="entry name" value="Ribosomal_uL5_CS"/>
</dbReference>
<dbReference type="InterPro" id="IPR022803">
    <property type="entry name" value="Ribosomal_uL5_dom_sf"/>
</dbReference>
<dbReference type="InterPro" id="IPR031310">
    <property type="entry name" value="Ribosomal_uL5_N"/>
</dbReference>
<dbReference type="NCBIfam" id="NF000585">
    <property type="entry name" value="PRK00010.1"/>
    <property type="match status" value="1"/>
</dbReference>
<dbReference type="PANTHER" id="PTHR11994">
    <property type="entry name" value="60S RIBOSOMAL PROTEIN L11-RELATED"/>
    <property type="match status" value="1"/>
</dbReference>
<dbReference type="Pfam" id="PF00281">
    <property type="entry name" value="Ribosomal_L5"/>
    <property type="match status" value="1"/>
</dbReference>
<dbReference type="Pfam" id="PF00673">
    <property type="entry name" value="Ribosomal_L5_C"/>
    <property type="match status" value="1"/>
</dbReference>
<dbReference type="PIRSF" id="PIRSF002161">
    <property type="entry name" value="Ribosomal_L5"/>
    <property type="match status" value="1"/>
</dbReference>
<dbReference type="SUPFAM" id="SSF55282">
    <property type="entry name" value="RL5-like"/>
    <property type="match status" value="1"/>
</dbReference>
<dbReference type="PROSITE" id="PS00358">
    <property type="entry name" value="RIBOSOMAL_L5"/>
    <property type="match status" value="1"/>
</dbReference>